<accession>Q5UXP9</accession>
<feature type="chain" id="PRO_0000247868" description="tRNA-guanine(15) transglycosylase">
    <location>
        <begin position="1"/>
        <end position="490"/>
    </location>
</feature>
<feature type="active site" description="Nucleophile" evidence="1">
    <location>
        <position position="92"/>
    </location>
</feature>
<feature type="binding site" evidence="1">
    <location>
        <position position="127"/>
    </location>
    <ligand>
        <name>substrate</name>
    </ligand>
</feature>
<feature type="binding site" evidence="1">
    <location>
        <position position="195"/>
    </location>
    <ligand>
        <name>substrate</name>
    </ligand>
</feature>
<feature type="binding site" evidence="1">
    <location>
        <position position="278"/>
    </location>
    <ligand>
        <name>Zn(2+)</name>
        <dbReference type="ChEBI" id="CHEBI:29105"/>
    </ligand>
</feature>
<feature type="binding site" evidence="1">
    <location>
        <position position="280"/>
    </location>
    <ligand>
        <name>Zn(2+)</name>
        <dbReference type="ChEBI" id="CHEBI:29105"/>
    </ligand>
</feature>
<feature type="binding site" evidence="1">
    <location>
        <position position="283"/>
    </location>
    <ligand>
        <name>Zn(2+)</name>
        <dbReference type="ChEBI" id="CHEBI:29105"/>
    </ligand>
</feature>
<proteinExistence type="inferred from homology"/>
<comment type="function">
    <text evidence="1">Exchanges the guanine residue with 7-cyano-7-deazaguanine (preQ0) at position 15 in the dihydrouridine loop (D-loop) of archaeal tRNAs.</text>
</comment>
<comment type="catalytic activity">
    <reaction evidence="1">
        <text>guanosine(15) in tRNA + 7-cyano-7-deazaguanine = 7-cyano-7-carbaguanosine(15) in tRNA + guanine</text>
        <dbReference type="Rhea" id="RHEA:43164"/>
        <dbReference type="Rhea" id="RHEA-COMP:10371"/>
        <dbReference type="Rhea" id="RHEA-COMP:10372"/>
        <dbReference type="ChEBI" id="CHEBI:16235"/>
        <dbReference type="ChEBI" id="CHEBI:45075"/>
        <dbReference type="ChEBI" id="CHEBI:74269"/>
        <dbReference type="ChEBI" id="CHEBI:82850"/>
        <dbReference type="EC" id="2.4.2.48"/>
    </reaction>
</comment>
<comment type="cofactor">
    <cofactor evidence="1">
        <name>Zn(2+)</name>
        <dbReference type="ChEBI" id="CHEBI:29105"/>
    </cofactor>
    <text evidence="1">Binds 1 zinc ion per subunit.</text>
</comment>
<comment type="pathway">
    <text evidence="1">tRNA modification; archaeosine-tRNA biosynthesis.</text>
</comment>
<comment type="similarity">
    <text evidence="1">Belongs to the archaeosine tRNA-ribosyltransferase family.</text>
</comment>
<reference key="1">
    <citation type="journal article" date="2004" name="Genome Res.">
        <title>Genome sequence of Haloarcula marismortui: a halophilic archaeon from the Dead Sea.</title>
        <authorList>
            <person name="Baliga N.S."/>
            <person name="Bonneau R."/>
            <person name="Facciotti M.T."/>
            <person name="Pan M."/>
            <person name="Glusman G."/>
            <person name="Deutsch E.W."/>
            <person name="Shannon P."/>
            <person name="Chiu Y."/>
            <person name="Weng R.S."/>
            <person name="Gan R.R."/>
            <person name="Hung P."/>
            <person name="Date S.V."/>
            <person name="Marcotte E."/>
            <person name="Hood L."/>
            <person name="Ng W.V."/>
        </authorList>
    </citation>
    <scope>NUCLEOTIDE SEQUENCE [LARGE SCALE GENOMIC DNA]</scope>
    <source>
        <strain>ATCC 43049 / DSM 3752 / JCM 8966 / VKM B-1809</strain>
    </source>
</reference>
<protein>
    <recommendedName>
        <fullName evidence="1">tRNA-guanine(15) transglycosylase</fullName>
        <ecNumber evidence="1">2.4.2.48</ecNumber>
    </recommendedName>
    <alternativeName>
        <fullName evidence="1">7-cyano-7-deazaguanine tRNA-ribosyltransferase</fullName>
    </alternativeName>
    <alternativeName>
        <fullName evidence="1">Archaeal tRNA-guanine transglycosylase</fullName>
    </alternativeName>
</protein>
<keyword id="KW-0328">Glycosyltransferase</keyword>
<keyword id="KW-0479">Metal-binding</keyword>
<keyword id="KW-1185">Reference proteome</keyword>
<keyword id="KW-0808">Transferase</keyword>
<keyword id="KW-0819">tRNA processing</keyword>
<keyword id="KW-0862">Zinc</keyword>
<name>ATGT_HALMA</name>
<dbReference type="EC" id="2.4.2.48" evidence="1"/>
<dbReference type="EMBL" id="AY596297">
    <property type="protein sequence ID" value="AAV47954.1"/>
    <property type="molecule type" value="Genomic_DNA"/>
</dbReference>
<dbReference type="RefSeq" id="WP_004964214.1">
    <property type="nucleotide sequence ID" value="NZ_CP039138.1"/>
</dbReference>
<dbReference type="SMR" id="Q5UXP9"/>
<dbReference type="STRING" id="272569.rrnAC3258"/>
<dbReference type="PaxDb" id="272569-rrnAC3258"/>
<dbReference type="EnsemblBacteria" id="AAV47954">
    <property type="protein sequence ID" value="AAV47954"/>
    <property type="gene ID" value="rrnAC3258"/>
</dbReference>
<dbReference type="GeneID" id="64823494"/>
<dbReference type="KEGG" id="hma:rrnAC3258"/>
<dbReference type="PATRIC" id="fig|272569.17.peg.3789"/>
<dbReference type="eggNOG" id="arCOG00989">
    <property type="taxonomic scope" value="Archaea"/>
</dbReference>
<dbReference type="HOGENOM" id="CLU_030083_0_0_2"/>
<dbReference type="UniPathway" id="UPA00393"/>
<dbReference type="Proteomes" id="UP000001169">
    <property type="component" value="Chromosome I"/>
</dbReference>
<dbReference type="GO" id="GO:0005737">
    <property type="term" value="C:cytoplasm"/>
    <property type="evidence" value="ECO:0007669"/>
    <property type="project" value="TreeGrafter"/>
</dbReference>
<dbReference type="GO" id="GO:0016763">
    <property type="term" value="F:pentosyltransferase activity"/>
    <property type="evidence" value="ECO:0007669"/>
    <property type="project" value="UniProtKB-UniRule"/>
</dbReference>
<dbReference type="GO" id="GO:0008270">
    <property type="term" value="F:zinc ion binding"/>
    <property type="evidence" value="ECO:0007669"/>
    <property type="project" value="UniProtKB-UniRule"/>
</dbReference>
<dbReference type="GO" id="GO:0002099">
    <property type="term" value="P:tRNA wobble guanine modification"/>
    <property type="evidence" value="ECO:0007669"/>
    <property type="project" value="TreeGrafter"/>
</dbReference>
<dbReference type="Gene3D" id="3.90.1020.10">
    <property type="entry name" value="ArcTGT, C1 domain"/>
    <property type="match status" value="1"/>
</dbReference>
<dbReference type="Gene3D" id="3.20.20.105">
    <property type="entry name" value="Queuine tRNA-ribosyltransferase-like"/>
    <property type="match status" value="1"/>
</dbReference>
<dbReference type="HAMAP" id="MF_01634">
    <property type="entry name" value="TgtA_arch"/>
    <property type="match status" value="1"/>
</dbReference>
<dbReference type="InterPro" id="IPR050076">
    <property type="entry name" value="ArchSynthase1/Queuine_TRR"/>
</dbReference>
<dbReference type="InterPro" id="IPR038370">
    <property type="entry name" value="ArcTGT_C1_sf"/>
</dbReference>
<dbReference type="InterPro" id="IPR036511">
    <property type="entry name" value="TGT-like_sf"/>
</dbReference>
<dbReference type="InterPro" id="IPR004804">
    <property type="entry name" value="TgtA"/>
</dbReference>
<dbReference type="InterPro" id="IPR002616">
    <property type="entry name" value="tRNA_ribo_trans-like"/>
</dbReference>
<dbReference type="NCBIfam" id="TIGR00432">
    <property type="entry name" value="arcsn_tRNA_tgt"/>
    <property type="match status" value="1"/>
</dbReference>
<dbReference type="NCBIfam" id="TIGR00449">
    <property type="entry name" value="tgt_general"/>
    <property type="match status" value="1"/>
</dbReference>
<dbReference type="PANTHER" id="PTHR46499">
    <property type="entry name" value="QUEUINE TRNA-RIBOSYLTRANSFERASE"/>
    <property type="match status" value="1"/>
</dbReference>
<dbReference type="PANTHER" id="PTHR46499:SF1">
    <property type="entry name" value="QUEUINE TRNA-RIBOSYLTRANSFERASE"/>
    <property type="match status" value="1"/>
</dbReference>
<dbReference type="Pfam" id="PF01702">
    <property type="entry name" value="TGT"/>
    <property type="match status" value="1"/>
</dbReference>
<dbReference type="SUPFAM" id="SSF88802">
    <property type="entry name" value="Pre-PUA domain"/>
    <property type="match status" value="1"/>
</dbReference>
<dbReference type="SUPFAM" id="SSF51713">
    <property type="entry name" value="tRNA-guanine transglycosylase"/>
    <property type="match status" value="1"/>
</dbReference>
<organism>
    <name type="scientific">Haloarcula marismortui (strain ATCC 43049 / DSM 3752 / JCM 8966 / VKM B-1809)</name>
    <name type="common">Halobacterium marismortui</name>
    <dbReference type="NCBI Taxonomy" id="272569"/>
    <lineage>
        <taxon>Archaea</taxon>
        <taxon>Methanobacteriati</taxon>
        <taxon>Methanobacteriota</taxon>
        <taxon>Stenosarchaea group</taxon>
        <taxon>Halobacteria</taxon>
        <taxon>Halobacteriales</taxon>
        <taxon>Haloarculaceae</taxon>
        <taxon>Haloarcula</taxon>
    </lineage>
</organism>
<evidence type="ECO:0000255" key="1">
    <source>
        <dbReference type="HAMAP-Rule" id="MF_01634"/>
    </source>
</evidence>
<gene>
    <name evidence="1" type="primary">tgtA</name>
    <name type="ordered locus">rrnAC3258</name>
</gene>
<sequence length="490" mass="53920">MTNFEVRQYDAAGRLGELTVPRAGVTVETPTILPVVNPHVQTVAPATLASEFGAEILITNSYILHGSDDLREPVLEQGLHDLLGFDGAIMTDSGSFQLAEYGDIDVTTEEILEFQHEIGSDIGTPVDIPTPPDVDRERATEELKTTQERLEHAATVDTGEMLVSAPVQGATYPDLRERAAADAVSTGLDVFPLGAVVPLMNEYRYADLADVVAACKRGLGEVGPVHLFGAGHPMMFAMAAALGCDLFDSAAYALYARDDRYLTVQGTELLDELSYFPCHCPVCTDHTPAELDAMDADAREELLARHNLHVTYGEIRTVKQAIRSGNLMELVDSRARGHPEMLDGYRALLDHSEQLERTDPVSKDAFFYTSTESARRPEVRRHQDRLERLPVEGEEVLLTEGSSSAQYDESWGVLPPFGPYPRELADTYPLTAETPDRTDRAAYEAAATGVRRLVELHPDVSFTLVHDDWPATALDRVPEGVRLRDLHARD</sequence>